<name>FENR2_LISW6</name>
<sequence length="331" mass="36469">MDEKTKIYDITIIGGGPVGLFAAFYAGMRNASVKIIESLPQLGGQLSTLYPEKYIYDIPGYPAVRAQELVNNLIQQMKPFDPTIALEEAVISVEKQVDGTFEIITKKDTHYSKAIVITAGNGAFEPRRLDLPEAEQYEGKNIHYFINDLSRFSGRRVAVCGGGDSAVDWALMLEKVASSVSIVHRRNAFRAHEHSVNNLEKSSITIKTPFIPTEVLGNGDKLTHITLQEVKGDTSETLEIDDFIINYGFVSSLGPIKNWGLELERNSIIVNSKMETSIPGIYCAGDICTYDGKVKLIATGFGEAPTAVNNAMNFIDPKTRVQPMHSTSLFE</sequence>
<keyword id="KW-0274">FAD</keyword>
<keyword id="KW-0285">Flavoprotein</keyword>
<keyword id="KW-0521">NADP</keyword>
<keyword id="KW-0560">Oxidoreductase</keyword>
<protein>
    <recommendedName>
        <fullName evidence="1">Ferredoxin--NADP reductase 2</fullName>
        <shortName evidence="1">FNR 2</shortName>
        <shortName evidence="1">Fd-NADP(+) reductase 2</shortName>
        <ecNumber evidence="1">1.18.1.2</ecNumber>
    </recommendedName>
</protein>
<gene>
    <name type="ordered locus">lwe2338</name>
</gene>
<organism>
    <name type="scientific">Listeria welshimeri serovar 6b (strain ATCC 35897 / DSM 20650 / CCUG 15529 / CIP 8149 / NCTC 11857 / SLCC 5334 / V8)</name>
    <dbReference type="NCBI Taxonomy" id="386043"/>
    <lineage>
        <taxon>Bacteria</taxon>
        <taxon>Bacillati</taxon>
        <taxon>Bacillota</taxon>
        <taxon>Bacilli</taxon>
        <taxon>Bacillales</taxon>
        <taxon>Listeriaceae</taxon>
        <taxon>Listeria</taxon>
    </lineage>
</organism>
<proteinExistence type="inferred from homology"/>
<comment type="catalytic activity">
    <reaction evidence="1">
        <text>2 reduced [2Fe-2S]-[ferredoxin] + NADP(+) + H(+) = 2 oxidized [2Fe-2S]-[ferredoxin] + NADPH</text>
        <dbReference type="Rhea" id="RHEA:20125"/>
        <dbReference type="Rhea" id="RHEA-COMP:10000"/>
        <dbReference type="Rhea" id="RHEA-COMP:10001"/>
        <dbReference type="ChEBI" id="CHEBI:15378"/>
        <dbReference type="ChEBI" id="CHEBI:33737"/>
        <dbReference type="ChEBI" id="CHEBI:33738"/>
        <dbReference type="ChEBI" id="CHEBI:57783"/>
        <dbReference type="ChEBI" id="CHEBI:58349"/>
        <dbReference type="EC" id="1.18.1.2"/>
    </reaction>
</comment>
<comment type="cofactor">
    <cofactor evidence="1">
        <name>FAD</name>
        <dbReference type="ChEBI" id="CHEBI:57692"/>
    </cofactor>
    <text evidence="1">Binds 1 FAD per subunit.</text>
</comment>
<comment type="subunit">
    <text evidence="1">Homodimer.</text>
</comment>
<comment type="similarity">
    <text evidence="1">Belongs to the ferredoxin--NADP reductase type 2 family.</text>
</comment>
<evidence type="ECO:0000255" key="1">
    <source>
        <dbReference type="HAMAP-Rule" id="MF_01685"/>
    </source>
</evidence>
<feature type="chain" id="PRO_0000364876" description="Ferredoxin--NADP reductase 2">
    <location>
        <begin position="1"/>
        <end position="331"/>
    </location>
</feature>
<feature type="binding site" evidence="1">
    <location>
        <position position="37"/>
    </location>
    <ligand>
        <name>FAD</name>
        <dbReference type="ChEBI" id="CHEBI:57692"/>
    </ligand>
</feature>
<feature type="binding site" evidence="1">
    <location>
        <position position="45"/>
    </location>
    <ligand>
        <name>FAD</name>
        <dbReference type="ChEBI" id="CHEBI:57692"/>
    </ligand>
</feature>
<feature type="binding site" evidence="1">
    <location>
        <position position="50"/>
    </location>
    <ligand>
        <name>FAD</name>
        <dbReference type="ChEBI" id="CHEBI:57692"/>
    </ligand>
</feature>
<feature type="binding site" evidence="1">
    <location>
        <position position="90"/>
    </location>
    <ligand>
        <name>FAD</name>
        <dbReference type="ChEBI" id="CHEBI:57692"/>
    </ligand>
</feature>
<feature type="binding site" evidence="1">
    <location>
        <position position="124"/>
    </location>
    <ligand>
        <name>FAD</name>
        <dbReference type="ChEBI" id="CHEBI:57692"/>
    </ligand>
</feature>
<feature type="binding site" evidence="1">
    <location>
        <position position="286"/>
    </location>
    <ligand>
        <name>FAD</name>
        <dbReference type="ChEBI" id="CHEBI:57692"/>
    </ligand>
</feature>
<feature type="binding site" evidence="1">
    <location>
        <position position="327"/>
    </location>
    <ligand>
        <name>FAD</name>
        <dbReference type="ChEBI" id="CHEBI:57692"/>
    </ligand>
</feature>
<reference key="1">
    <citation type="journal article" date="2006" name="J. Bacteriol.">
        <title>Whole-genome sequence of Listeria welshimeri reveals common steps in genome reduction with Listeria innocua as compared to Listeria monocytogenes.</title>
        <authorList>
            <person name="Hain T."/>
            <person name="Steinweg C."/>
            <person name="Kuenne C.T."/>
            <person name="Billion A."/>
            <person name="Ghai R."/>
            <person name="Chatterjee S.S."/>
            <person name="Domann E."/>
            <person name="Kaerst U."/>
            <person name="Goesmann A."/>
            <person name="Bekel T."/>
            <person name="Bartels D."/>
            <person name="Kaiser O."/>
            <person name="Meyer F."/>
            <person name="Puehler A."/>
            <person name="Weisshaar B."/>
            <person name="Wehland J."/>
            <person name="Liang C."/>
            <person name="Dandekar T."/>
            <person name="Lampidis R."/>
            <person name="Kreft J."/>
            <person name="Goebel W."/>
            <person name="Chakraborty T."/>
        </authorList>
    </citation>
    <scope>NUCLEOTIDE SEQUENCE [LARGE SCALE GENOMIC DNA]</scope>
    <source>
        <strain>ATCC 35897 / DSM 20650 / CCUG 15529 / CIP 8149 / NCTC 11857 / SLCC 5334 / V8</strain>
    </source>
</reference>
<accession>A0AL74</accession>
<dbReference type="EC" id="1.18.1.2" evidence="1"/>
<dbReference type="EMBL" id="AM263198">
    <property type="protein sequence ID" value="CAK21756.1"/>
    <property type="molecule type" value="Genomic_DNA"/>
</dbReference>
<dbReference type="RefSeq" id="WP_011703081.1">
    <property type="nucleotide sequence ID" value="NC_008555.1"/>
</dbReference>
<dbReference type="SMR" id="A0AL74"/>
<dbReference type="STRING" id="386043.lwe2338"/>
<dbReference type="GeneID" id="61190260"/>
<dbReference type="KEGG" id="lwe:lwe2338"/>
<dbReference type="eggNOG" id="COG0492">
    <property type="taxonomic scope" value="Bacteria"/>
</dbReference>
<dbReference type="HOGENOM" id="CLU_031864_5_5_9"/>
<dbReference type="OrthoDB" id="9806179at2"/>
<dbReference type="Proteomes" id="UP000000779">
    <property type="component" value="Chromosome"/>
</dbReference>
<dbReference type="GO" id="GO:0004324">
    <property type="term" value="F:ferredoxin-NADP+ reductase activity"/>
    <property type="evidence" value="ECO:0007669"/>
    <property type="project" value="UniProtKB-UniRule"/>
</dbReference>
<dbReference type="GO" id="GO:0050660">
    <property type="term" value="F:flavin adenine dinucleotide binding"/>
    <property type="evidence" value="ECO:0007669"/>
    <property type="project" value="UniProtKB-UniRule"/>
</dbReference>
<dbReference type="GO" id="GO:0050661">
    <property type="term" value="F:NADP binding"/>
    <property type="evidence" value="ECO:0007669"/>
    <property type="project" value="UniProtKB-UniRule"/>
</dbReference>
<dbReference type="Gene3D" id="3.50.50.60">
    <property type="entry name" value="FAD/NAD(P)-binding domain"/>
    <property type="match status" value="2"/>
</dbReference>
<dbReference type="HAMAP" id="MF_01685">
    <property type="entry name" value="FENR2"/>
    <property type="match status" value="1"/>
</dbReference>
<dbReference type="InterPro" id="IPR036188">
    <property type="entry name" value="FAD/NAD-bd_sf"/>
</dbReference>
<dbReference type="InterPro" id="IPR023753">
    <property type="entry name" value="FAD/NAD-binding_dom"/>
</dbReference>
<dbReference type="InterPro" id="IPR022890">
    <property type="entry name" value="Fd--NADP_Rdtase_type_2"/>
</dbReference>
<dbReference type="InterPro" id="IPR050097">
    <property type="entry name" value="Ferredoxin-NADP_redctase_2"/>
</dbReference>
<dbReference type="PANTHER" id="PTHR48105">
    <property type="entry name" value="THIOREDOXIN REDUCTASE 1-RELATED-RELATED"/>
    <property type="match status" value="1"/>
</dbReference>
<dbReference type="Pfam" id="PF07992">
    <property type="entry name" value="Pyr_redox_2"/>
    <property type="match status" value="1"/>
</dbReference>
<dbReference type="PRINTS" id="PR00368">
    <property type="entry name" value="FADPNR"/>
</dbReference>
<dbReference type="PRINTS" id="PR00469">
    <property type="entry name" value="PNDRDTASEII"/>
</dbReference>
<dbReference type="SUPFAM" id="SSF51905">
    <property type="entry name" value="FAD/NAD(P)-binding domain"/>
    <property type="match status" value="1"/>
</dbReference>